<organism>
    <name type="scientific">Gluconacetobacter diazotrophicus (strain ATCC 49037 / DSM 5601 / CCUG 37298 / CIP 103539 / LMG 7603 / PAl5)</name>
    <dbReference type="NCBI Taxonomy" id="272568"/>
    <lineage>
        <taxon>Bacteria</taxon>
        <taxon>Pseudomonadati</taxon>
        <taxon>Pseudomonadota</taxon>
        <taxon>Alphaproteobacteria</taxon>
        <taxon>Acetobacterales</taxon>
        <taxon>Acetobacteraceae</taxon>
        <taxon>Gluconacetobacter</taxon>
    </lineage>
</organism>
<proteinExistence type="evidence at protein level"/>
<evidence type="ECO:0000255" key="1">
    <source>
        <dbReference type="PROSITE-ProRule" id="PRU00473"/>
    </source>
</evidence>
<evidence type="ECO:0000269" key="2">
    <source ref="3"/>
</evidence>
<evidence type="ECO:0000305" key="3"/>
<gene>
    <name type="ordered locus">GDI2185</name>
    <name type="ordered locus">Gdia_0404</name>
</gene>
<protein>
    <recommendedName>
        <fullName>Outer membrane protein</fullName>
    </recommendedName>
    <alternativeName>
        <fullName>OMPC</fullName>
    </alternativeName>
</protein>
<name>OMPC_GLUDA</name>
<feature type="signal peptide" evidence="2">
    <location>
        <begin position="1"/>
        <end position="22"/>
    </location>
</feature>
<feature type="chain" id="PRO_0000260050" description="Outer membrane protein">
    <location>
        <begin position="23"/>
        <end position="378"/>
    </location>
</feature>
<feature type="domain" description="OmpA-like" evidence="1">
    <location>
        <begin position="258"/>
        <end position="378"/>
    </location>
</feature>
<reference key="1">
    <citation type="journal article" date="2009" name="BMC Genomics">
        <title>Complete genome sequence of the sugarcane nitrogen-fixing endophyte Gluconacetobacter diazotrophicus Pal5.</title>
        <authorList>
            <person name="Bertalan M."/>
            <person name="Albano R."/>
            <person name="de Padua V."/>
            <person name="Rouws L."/>
            <person name="Rojas C."/>
            <person name="Hemerly A."/>
            <person name="Teixeira K."/>
            <person name="Schwab S."/>
            <person name="Araujo J."/>
            <person name="Oliveira A."/>
            <person name="Franca L."/>
            <person name="Magalhaes V."/>
            <person name="Alqueres S."/>
            <person name="Cardoso A."/>
            <person name="Almeida W."/>
            <person name="Loureiro M.M."/>
            <person name="Nogueira E."/>
            <person name="Cidade D."/>
            <person name="Oliveira D."/>
            <person name="Simao T."/>
            <person name="Macedo J."/>
            <person name="Valadao A."/>
            <person name="Dreschsel M."/>
            <person name="Freitas F."/>
            <person name="Vidal M."/>
            <person name="Guedes H."/>
            <person name="Rodrigues E."/>
            <person name="Meneses C."/>
            <person name="Brioso P."/>
            <person name="Pozzer L."/>
            <person name="Figueiredo D."/>
            <person name="Montano H."/>
            <person name="Junior J."/>
            <person name="de Souza Filho G."/>
            <person name="Martin Quintana Flores V."/>
            <person name="Ferreira B."/>
            <person name="Branco A."/>
            <person name="Gonzalez P."/>
            <person name="Guillobel H."/>
            <person name="Lemos M."/>
            <person name="Seibel L."/>
            <person name="Macedo J."/>
            <person name="Alves-Ferreira M."/>
            <person name="Sachetto-Martins G."/>
            <person name="Coelho A."/>
            <person name="Santos E."/>
            <person name="Amaral G."/>
            <person name="Neves A."/>
            <person name="Pacheco A.B."/>
            <person name="Carvalho D."/>
            <person name="Lery L."/>
            <person name="Bisch P."/>
            <person name="Rossle S.C."/>
            <person name="Urmenyi T."/>
            <person name="Rael Pereira A."/>
            <person name="Silva R."/>
            <person name="Rondinelli E."/>
            <person name="von Kruger W."/>
            <person name="Martins O."/>
            <person name="Baldani J.I."/>
            <person name="Ferreira P.C."/>
        </authorList>
    </citation>
    <scope>NUCLEOTIDE SEQUENCE [LARGE SCALE GENOMIC DNA]</scope>
    <source>
        <strain>ATCC 49037 / DSM 5601 / CCUG 37298 / CIP 103539 / LMG 7603 / PAl5</strain>
    </source>
</reference>
<reference key="2">
    <citation type="journal article" date="2010" name="Stand. Genomic Sci.">
        <title>Two genome sequences of the same bacterial strain, Gluconacetobacter diazotrophicus PAl 5, suggest a new standard in genome sequence submission.</title>
        <authorList>
            <person name="Giongo A."/>
            <person name="Tyler H.L."/>
            <person name="Zipperer U.N."/>
            <person name="Triplett E.W."/>
        </authorList>
    </citation>
    <scope>NUCLEOTIDE SEQUENCE [LARGE SCALE GENOMIC DNA]</scope>
    <source>
        <strain>ATCC 49037 / DSM 5601 / CCUG 37298 / CIP 103539 / LMG 7603 / PAl5</strain>
    </source>
</reference>
<reference evidence="3" key="3">
    <citation type="submission" date="2006-03" db="UniProtKB">
        <title>Cellobiose induces growth in Gluconacetobacter diazotrophicus ATCC 49037T.</title>
        <authorList>
            <person name="Dutta D."/>
            <person name="Gachhui R."/>
        </authorList>
    </citation>
    <scope>PROTEIN SEQUENCE OF 23-37</scope>
    <scope>FUNCTION</scope>
    <scope>SUBCELLULAR LOCATION</scope>
    <scope>INDUCTION</scope>
</reference>
<comment type="function">
    <text evidence="2">Growth enhancer.</text>
</comment>
<comment type="subcellular location">
    <subcellularLocation>
        <location evidence="2">Cell outer membrane</location>
    </subcellularLocation>
</comment>
<comment type="induction">
    <text evidence="2">By cellobiose.</text>
</comment>
<sequence>MRLRTALLATTLMAAAPVAANATIITGPYVDLGGGYNLVQNQHGHFSNDPANASMLTKSSSQYRHDAGFTGFGAVGWGFGNGLRLEAEGLYNYSEINHRAPTAATGVTSGHDQSYGGMLNVLYDIDLKQFGIDVPVTPFVGVGAGYLWQNVSPTTTRYSNGNVSRLGGTNGGFAYQGIVGAAYDIPNMPGLQLTAQYRMVGQAFSDGPFTMTSYTNGVGKSVGHAFFDNRFNHQFILGLRYAFNTAPPPPPPAPVVVPPAPTPARTYLVFFDWDRSDLTARAREIVAEAAQASTHVQTTRIEVNGYTDNSAAHPGPRGEKYNMGLSIRRAQSVKAELIRDGVPTGAIDIHGYGEQHPLVPTGPNTREPQNRRVEIILH</sequence>
<keyword id="KW-0998">Cell outer membrane</keyword>
<keyword id="KW-0903">Direct protein sequencing</keyword>
<keyword id="KW-0449">Lipoprotein</keyword>
<keyword id="KW-0472">Membrane</keyword>
<keyword id="KW-1185">Reference proteome</keyword>
<keyword id="KW-0732">Signal</keyword>
<accession>P84838</accession>
<accession>A9HL67</accession>
<accession>B5ZCD6</accession>
<dbReference type="EMBL" id="AM889285">
    <property type="protein sequence ID" value="CAP56128.1"/>
    <property type="molecule type" value="Genomic_DNA"/>
</dbReference>
<dbReference type="EMBL" id="CP001189">
    <property type="protein sequence ID" value="ACI50200.1"/>
    <property type="molecule type" value="Genomic_DNA"/>
</dbReference>
<dbReference type="RefSeq" id="WP_012226014.1">
    <property type="nucleotide sequence ID" value="NC_010125.1"/>
</dbReference>
<dbReference type="STRING" id="272568.GDI2185"/>
<dbReference type="KEGG" id="gdi:GDI2185"/>
<dbReference type="KEGG" id="gdj:Gdia_0404"/>
<dbReference type="eggNOG" id="COG2885">
    <property type="taxonomic scope" value="Bacteria"/>
</dbReference>
<dbReference type="eggNOG" id="COG3637">
    <property type="taxonomic scope" value="Bacteria"/>
</dbReference>
<dbReference type="HOGENOM" id="CLU_057473_4_0_5"/>
<dbReference type="OrthoDB" id="189250at2"/>
<dbReference type="Proteomes" id="UP000001176">
    <property type="component" value="Chromosome"/>
</dbReference>
<dbReference type="GO" id="GO:0009279">
    <property type="term" value="C:cell outer membrane"/>
    <property type="evidence" value="ECO:0007669"/>
    <property type="project" value="UniProtKB-SubCell"/>
</dbReference>
<dbReference type="CDD" id="cd07185">
    <property type="entry name" value="OmpA_C-like"/>
    <property type="match status" value="1"/>
</dbReference>
<dbReference type="Gene3D" id="2.40.160.20">
    <property type="match status" value="1"/>
</dbReference>
<dbReference type="Gene3D" id="3.30.1330.60">
    <property type="entry name" value="OmpA-like domain"/>
    <property type="match status" value="1"/>
</dbReference>
<dbReference type="InterPro" id="IPR050330">
    <property type="entry name" value="Bact_OuterMem_StrucFunc"/>
</dbReference>
<dbReference type="InterPro" id="IPR002566">
    <property type="entry name" value="Msp4_OMP-like"/>
</dbReference>
<dbReference type="InterPro" id="IPR011250">
    <property type="entry name" value="OMP/PagP_b-brl"/>
</dbReference>
<dbReference type="InterPro" id="IPR006665">
    <property type="entry name" value="OmpA-like"/>
</dbReference>
<dbReference type="InterPro" id="IPR036737">
    <property type="entry name" value="OmpA-like_sf"/>
</dbReference>
<dbReference type="PANTHER" id="PTHR30329:SF21">
    <property type="entry name" value="LIPOPROTEIN YIAD-RELATED"/>
    <property type="match status" value="1"/>
</dbReference>
<dbReference type="PANTHER" id="PTHR30329">
    <property type="entry name" value="STATOR ELEMENT OF FLAGELLAR MOTOR COMPLEX"/>
    <property type="match status" value="1"/>
</dbReference>
<dbReference type="Pfam" id="PF00691">
    <property type="entry name" value="OmpA"/>
    <property type="match status" value="1"/>
</dbReference>
<dbReference type="Pfam" id="PF01617">
    <property type="entry name" value="Surface_Ag_2"/>
    <property type="match status" value="1"/>
</dbReference>
<dbReference type="SUPFAM" id="SSF56925">
    <property type="entry name" value="OMPA-like"/>
    <property type="match status" value="1"/>
</dbReference>
<dbReference type="SUPFAM" id="SSF103088">
    <property type="entry name" value="OmpA-like"/>
    <property type="match status" value="1"/>
</dbReference>
<dbReference type="PROSITE" id="PS51123">
    <property type="entry name" value="OMPA_2"/>
    <property type="match status" value="1"/>
</dbReference>